<keyword id="KW-0067">ATP-binding</keyword>
<keyword id="KW-0966">Cell projection</keyword>
<keyword id="KW-0969">Cilium</keyword>
<keyword id="KW-0963">Cytoplasm</keyword>
<keyword id="KW-0206">Cytoskeleton</keyword>
<keyword id="KW-0225">Disease variant</keyword>
<keyword id="KW-0418">Kinase</keyword>
<keyword id="KW-0460">Magnesium</keyword>
<keyword id="KW-0479">Metal-binding</keyword>
<keyword id="KW-0547">Nucleotide-binding</keyword>
<keyword id="KW-0597">Phosphoprotein</keyword>
<keyword id="KW-1185">Reference proteome</keyword>
<keyword id="KW-0677">Repeat</keyword>
<keyword id="KW-0723">Serine/threonine-protein kinase</keyword>
<keyword id="KW-0808">Transferase</keyword>
<accession>D3ZGQ5</accession>
<proteinExistence type="evidence at protein level"/>
<feature type="chain" id="PRO_0000424415" description="Serine/threonine-protein kinase Nek8">
    <location>
        <begin position="1"/>
        <end position="698"/>
    </location>
</feature>
<feature type="domain" description="Protein kinase" evidence="4">
    <location>
        <begin position="4"/>
        <end position="258"/>
    </location>
</feature>
<feature type="repeat" description="RCC1 1">
    <location>
        <begin position="415"/>
        <end position="466"/>
    </location>
</feature>
<feature type="repeat" description="RCC1 2">
    <location>
        <begin position="467"/>
        <end position="518"/>
    </location>
</feature>
<feature type="repeat" description="RCC1 3">
    <location>
        <begin position="520"/>
        <end position="571"/>
    </location>
</feature>
<feature type="repeat" description="RCC1 4">
    <location>
        <begin position="585"/>
        <end position="636"/>
    </location>
</feature>
<feature type="repeat" description="RCC1 5">
    <location>
        <begin position="638"/>
        <end position="689"/>
    </location>
</feature>
<feature type="region of interest" description="Disordered" evidence="6">
    <location>
        <begin position="281"/>
        <end position="307"/>
    </location>
</feature>
<feature type="active site" description="Proton acceptor" evidence="4 5">
    <location>
        <position position="128"/>
    </location>
</feature>
<feature type="binding site" evidence="4">
    <location>
        <begin position="10"/>
        <end position="18"/>
    </location>
    <ligand>
        <name>ATP</name>
        <dbReference type="ChEBI" id="CHEBI:30616"/>
    </ligand>
</feature>
<feature type="binding site" evidence="4">
    <location>
        <position position="33"/>
    </location>
    <ligand>
        <name>ATP</name>
        <dbReference type="ChEBI" id="CHEBI:30616"/>
    </ligand>
</feature>
<feature type="modified residue" description="Phosphothreonine; by autocatalysis" evidence="1">
    <location>
        <position position="162"/>
    </location>
</feature>
<reference key="1">
    <citation type="journal article" date="2004" name="Nature">
        <title>Genome sequence of the Brown Norway rat yields insights into mammalian evolution.</title>
        <authorList>
            <person name="Gibbs R.A."/>
            <person name="Weinstock G.M."/>
            <person name="Metzker M.L."/>
            <person name="Muzny D.M."/>
            <person name="Sodergren E.J."/>
            <person name="Scherer S."/>
            <person name="Scott G."/>
            <person name="Steffen D."/>
            <person name="Worley K.C."/>
            <person name="Burch P.E."/>
            <person name="Okwuonu G."/>
            <person name="Hines S."/>
            <person name="Lewis L."/>
            <person name="Deramo C."/>
            <person name="Delgado O."/>
            <person name="Dugan-Rocha S."/>
            <person name="Miner G."/>
            <person name="Morgan M."/>
            <person name="Hawes A."/>
            <person name="Gill R."/>
            <person name="Holt R.A."/>
            <person name="Adams M.D."/>
            <person name="Amanatides P.G."/>
            <person name="Baden-Tillson H."/>
            <person name="Barnstead M."/>
            <person name="Chin S."/>
            <person name="Evans C.A."/>
            <person name="Ferriera S."/>
            <person name="Fosler C."/>
            <person name="Glodek A."/>
            <person name="Gu Z."/>
            <person name="Jennings D."/>
            <person name="Kraft C.L."/>
            <person name="Nguyen T."/>
            <person name="Pfannkoch C.M."/>
            <person name="Sitter C."/>
            <person name="Sutton G.G."/>
            <person name="Venter J.C."/>
            <person name="Woodage T."/>
            <person name="Smith D."/>
            <person name="Lee H.-M."/>
            <person name="Gustafson E."/>
            <person name="Cahill P."/>
            <person name="Kana A."/>
            <person name="Doucette-Stamm L."/>
            <person name="Weinstock K."/>
            <person name="Fechtel K."/>
            <person name="Weiss R.B."/>
            <person name="Dunn D.M."/>
            <person name="Green E.D."/>
            <person name="Blakesley R.W."/>
            <person name="Bouffard G.G."/>
            <person name="De Jong P.J."/>
            <person name="Osoegawa K."/>
            <person name="Zhu B."/>
            <person name="Marra M."/>
            <person name="Schein J."/>
            <person name="Bosdet I."/>
            <person name="Fjell C."/>
            <person name="Jones S."/>
            <person name="Krzywinski M."/>
            <person name="Mathewson C."/>
            <person name="Siddiqui A."/>
            <person name="Wye N."/>
            <person name="McPherson J."/>
            <person name="Zhao S."/>
            <person name="Fraser C.M."/>
            <person name="Shetty J."/>
            <person name="Shatsman S."/>
            <person name="Geer K."/>
            <person name="Chen Y."/>
            <person name="Abramzon S."/>
            <person name="Nierman W.C."/>
            <person name="Havlak P.H."/>
            <person name="Chen R."/>
            <person name="Durbin K.J."/>
            <person name="Egan A."/>
            <person name="Ren Y."/>
            <person name="Song X.-Z."/>
            <person name="Li B."/>
            <person name="Liu Y."/>
            <person name="Qin X."/>
            <person name="Cawley S."/>
            <person name="Cooney A.J."/>
            <person name="D'Souza L.M."/>
            <person name="Martin K."/>
            <person name="Wu J.Q."/>
            <person name="Gonzalez-Garay M.L."/>
            <person name="Jackson A.R."/>
            <person name="Kalafus K.J."/>
            <person name="McLeod M.P."/>
            <person name="Milosavljevic A."/>
            <person name="Virk D."/>
            <person name="Volkov A."/>
            <person name="Wheeler D.A."/>
            <person name="Zhang Z."/>
            <person name="Bailey J.A."/>
            <person name="Eichler E.E."/>
            <person name="Tuzun E."/>
            <person name="Birney E."/>
            <person name="Mongin E."/>
            <person name="Ureta-Vidal A."/>
            <person name="Woodwark C."/>
            <person name="Zdobnov E."/>
            <person name="Bork P."/>
            <person name="Suyama M."/>
            <person name="Torrents D."/>
            <person name="Alexandersson M."/>
            <person name="Trask B.J."/>
            <person name="Young J.M."/>
            <person name="Huang H."/>
            <person name="Wang H."/>
            <person name="Xing H."/>
            <person name="Daniels S."/>
            <person name="Gietzen D."/>
            <person name="Schmidt J."/>
            <person name="Stevens K."/>
            <person name="Vitt U."/>
            <person name="Wingrove J."/>
            <person name="Camara F."/>
            <person name="Mar Alba M."/>
            <person name="Abril J.F."/>
            <person name="Guigo R."/>
            <person name="Smit A."/>
            <person name="Dubchak I."/>
            <person name="Rubin E.M."/>
            <person name="Couronne O."/>
            <person name="Poliakov A."/>
            <person name="Huebner N."/>
            <person name="Ganten D."/>
            <person name="Goesele C."/>
            <person name="Hummel O."/>
            <person name="Kreitler T."/>
            <person name="Lee Y.-A."/>
            <person name="Monti J."/>
            <person name="Schulz H."/>
            <person name="Zimdahl H."/>
            <person name="Himmelbauer H."/>
            <person name="Lehrach H."/>
            <person name="Jacob H.J."/>
            <person name="Bromberg S."/>
            <person name="Gullings-Handley J."/>
            <person name="Jensen-Seaman M.I."/>
            <person name="Kwitek A.E."/>
            <person name="Lazar J."/>
            <person name="Pasko D."/>
            <person name="Tonellato P.J."/>
            <person name="Twigger S."/>
            <person name="Ponting C.P."/>
            <person name="Duarte J.M."/>
            <person name="Rice S."/>
            <person name="Goodstadt L."/>
            <person name="Beatson S.A."/>
            <person name="Emes R.D."/>
            <person name="Winter E.E."/>
            <person name="Webber C."/>
            <person name="Brandt P."/>
            <person name="Nyakatura G."/>
            <person name="Adetobi M."/>
            <person name="Chiaromonte F."/>
            <person name="Elnitski L."/>
            <person name="Eswara P."/>
            <person name="Hardison R.C."/>
            <person name="Hou M."/>
            <person name="Kolbe D."/>
            <person name="Makova K."/>
            <person name="Miller W."/>
            <person name="Nekrutenko A."/>
            <person name="Riemer C."/>
            <person name="Schwartz S."/>
            <person name="Taylor J."/>
            <person name="Yang S."/>
            <person name="Zhang Y."/>
            <person name="Lindpaintner K."/>
            <person name="Andrews T.D."/>
            <person name="Caccamo M."/>
            <person name="Clamp M."/>
            <person name="Clarke L."/>
            <person name="Curwen V."/>
            <person name="Durbin R.M."/>
            <person name="Eyras E."/>
            <person name="Searle S.M."/>
            <person name="Cooper G.M."/>
            <person name="Batzoglou S."/>
            <person name="Brudno M."/>
            <person name="Sidow A."/>
            <person name="Stone E.A."/>
            <person name="Payseur B.A."/>
            <person name="Bourque G."/>
            <person name="Lopez-Otin C."/>
            <person name="Puente X.S."/>
            <person name="Chakrabarti K."/>
            <person name="Chatterji S."/>
            <person name="Dewey C."/>
            <person name="Pachter L."/>
            <person name="Bray N."/>
            <person name="Yap V.B."/>
            <person name="Caspi A."/>
            <person name="Tesler G."/>
            <person name="Pevzner P.A."/>
            <person name="Haussler D."/>
            <person name="Roskin K.M."/>
            <person name="Baertsch R."/>
            <person name="Clawson H."/>
            <person name="Furey T.S."/>
            <person name="Hinrichs A.S."/>
            <person name="Karolchik D."/>
            <person name="Kent W.J."/>
            <person name="Rosenbloom K.R."/>
            <person name="Trumbower H."/>
            <person name="Weirauch M."/>
            <person name="Cooper D.N."/>
            <person name="Stenson P.D."/>
            <person name="Ma B."/>
            <person name="Brent M."/>
            <person name="Arumugam M."/>
            <person name="Shteynberg D."/>
            <person name="Copley R.R."/>
            <person name="Taylor M.S."/>
            <person name="Riethman H."/>
            <person name="Mudunuri U."/>
            <person name="Peterson J."/>
            <person name="Guyer M."/>
            <person name="Felsenfeld A."/>
            <person name="Old S."/>
            <person name="Mockrin S."/>
            <person name="Collins F.S."/>
        </authorList>
    </citation>
    <scope>NUCLEOTIDE SEQUENCE [LARGE SCALE GENOMIC DNA]</scope>
    <source>
        <strain>Brown Norway</strain>
    </source>
</reference>
<reference key="2">
    <citation type="submission" date="2005-07" db="EMBL/GenBank/DDBJ databases">
        <authorList>
            <person name="Mural R.J."/>
            <person name="Adams M.D."/>
            <person name="Myers E.W."/>
            <person name="Smith H.O."/>
            <person name="Venter J.C."/>
        </authorList>
    </citation>
    <scope>NUCLEOTIDE SEQUENCE [LARGE SCALE GENOMIC DNA]</scope>
</reference>
<reference key="3">
    <citation type="journal article" date="2013" name="Nat. Genet.">
        <title>ANKS6 is a central component of a nephronophthisis module linking NEK8 to INVS and NPHP3.</title>
        <authorList>
            <person name="Hoff S."/>
            <person name="Halbritter J."/>
            <person name="Epting D."/>
            <person name="Frank V."/>
            <person name="Nguyen T.M."/>
            <person name="van Reeuwijk J."/>
            <person name="Boehlke C."/>
            <person name="Schell C."/>
            <person name="Yasunaga T."/>
            <person name="Helmstadter M."/>
            <person name="Mergen M."/>
            <person name="Filhol E."/>
            <person name="Boldt K."/>
            <person name="Horn N."/>
            <person name="Ueffing M."/>
            <person name="Otto E.A."/>
            <person name="Eisenberger T."/>
            <person name="Elting M.W."/>
            <person name="van Wijk J.A."/>
            <person name="Bockenhauer D."/>
            <person name="Sebire N.J."/>
            <person name="Rittig S."/>
            <person name="Vyberg M."/>
            <person name="Ring T."/>
            <person name="Pohl M."/>
            <person name="Pape L."/>
            <person name="Neuhaus T.J."/>
            <person name="Elshakhs N.A."/>
            <person name="Koon S.J."/>
            <person name="Harris P.C."/>
            <person name="Grahammer F."/>
            <person name="Huber T.B."/>
            <person name="Kuehn E.W."/>
            <person name="Kramer-Zucker A."/>
            <person name="Bolz H.J."/>
            <person name="Roepman R."/>
            <person name="Saunier S."/>
            <person name="Walz G."/>
            <person name="Hildebrandt F."/>
            <person name="Bergmann C."/>
            <person name="Lienkamp S.S."/>
        </authorList>
    </citation>
    <scope>INTERACTION WITH ANKS6; INVS AND NPHP3</scope>
</reference>
<protein>
    <recommendedName>
        <fullName>Serine/threonine-protein kinase Nek8</fullName>
        <ecNumber>2.7.11.1</ecNumber>
    </recommendedName>
    <alternativeName>
        <fullName>Never in mitosis A-related kinase 8</fullName>
        <shortName>NimA-related protein kinase 8</shortName>
    </alternativeName>
</protein>
<comment type="function">
    <text evidence="3">Required for renal tubular integrity. May regulate local cytoskeletal structure in kidney tubule epithelial cells. May regulate ciliary biogenesis through targeting of proteins to the cilia. Plays a role in organogenesis and is involved in the regulation of the Hippo signaling pathway (By similarity).</text>
</comment>
<comment type="catalytic activity">
    <reaction>
        <text>L-seryl-[protein] + ATP = O-phospho-L-seryl-[protein] + ADP + H(+)</text>
        <dbReference type="Rhea" id="RHEA:17989"/>
        <dbReference type="Rhea" id="RHEA-COMP:9863"/>
        <dbReference type="Rhea" id="RHEA-COMP:11604"/>
        <dbReference type="ChEBI" id="CHEBI:15378"/>
        <dbReference type="ChEBI" id="CHEBI:29999"/>
        <dbReference type="ChEBI" id="CHEBI:30616"/>
        <dbReference type="ChEBI" id="CHEBI:83421"/>
        <dbReference type="ChEBI" id="CHEBI:456216"/>
        <dbReference type="EC" id="2.7.11.1"/>
    </reaction>
</comment>
<comment type="catalytic activity">
    <reaction>
        <text>L-threonyl-[protein] + ATP = O-phospho-L-threonyl-[protein] + ADP + H(+)</text>
        <dbReference type="Rhea" id="RHEA:46608"/>
        <dbReference type="Rhea" id="RHEA-COMP:11060"/>
        <dbReference type="Rhea" id="RHEA-COMP:11605"/>
        <dbReference type="ChEBI" id="CHEBI:15378"/>
        <dbReference type="ChEBI" id="CHEBI:30013"/>
        <dbReference type="ChEBI" id="CHEBI:30616"/>
        <dbReference type="ChEBI" id="CHEBI:61977"/>
        <dbReference type="ChEBI" id="CHEBI:456216"/>
        <dbReference type="EC" id="2.7.11.1"/>
    </reaction>
</comment>
<comment type="cofactor">
    <cofactor evidence="1">
        <name>Mg(2+)</name>
        <dbReference type="ChEBI" id="CHEBI:18420"/>
    </cofactor>
</comment>
<comment type="subunit">
    <text evidence="3 7">Interacts with PKD2; may regulate PKD2 targeting to the cilium (By similarity). Interacts with ANKS6 (By similarity). Component of a complex containing at least ANKS6, INVS, NEK8 and NPHP3 (PubMed:23793029). ANKS6 may organize complex assembly by linking INVS and NPHP3 to NEK8 and INVS may target it to the proximal ciliary axoneme (PubMed:23793029). Interacts with ANKS3 (By similarity).</text>
</comment>
<comment type="subcellular location">
    <subcellularLocation>
        <location evidence="3">Cytoplasm</location>
    </subcellularLocation>
    <subcellularLocation>
        <location evidence="3">Cytoplasm</location>
        <location evidence="3">Cytoskeleton</location>
    </subcellularLocation>
    <subcellularLocation>
        <location evidence="3">Cell projection</location>
        <location evidence="3">Cilium</location>
    </subcellularLocation>
    <subcellularLocation>
        <location evidence="2">Cytoplasm</location>
        <location evidence="2">Cytoskeleton</location>
        <location evidence="2">Cilium axoneme</location>
    </subcellularLocation>
    <subcellularLocation>
        <location evidence="2">Cytoplasm</location>
        <location evidence="2">Cytoskeleton</location>
        <location evidence="2">Microtubule organizing center</location>
        <location evidence="2">Centrosome</location>
    </subcellularLocation>
    <text evidence="3">Predominantly cytoplasmic. Localizes to the proximal region of the primary cilium and is not observed in dividing cells (By similarity).</text>
</comment>
<comment type="similarity">
    <text evidence="8">Belongs to the protein kinase superfamily. NEK Ser/Thr protein kinase family. NIMA subfamily.</text>
</comment>
<gene>
    <name type="primary">Nek8</name>
    <name type="synonym">Jck</name>
</gene>
<dbReference type="EC" id="2.7.11.1"/>
<dbReference type="EMBL" id="AABR06064754">
    <property type="status" value="NOT_ANNOTATED_CDS"/>
    <property type="molecule type" value="Genomic_DNA"/>
</dbReference>
<dbReference type="EMBL" id="CH473948">
    <property type="protein sequence ID" value="EDM05318.1"/>
    <property type="molecule type" value="Genomic_DNA"/>
</dbReference>
<dbReference type="RefSeq" id="NP_001099274.1">
    <property type="nucleotide sequence ID" value="NM_001105804.2"/>
</dbReference>
<dbReference type="RefSeq" id="XP_006246995.1">
    <property type="nucleotide sequence ID" value="XM_006246933.2"/>
</dbReference>
<dbReference type="SMR" id="D3ZGQ5"/>
<dbReference type="FunCoup" id="D3ZGQ5">
    <property type="interactions" value="135"/>
</dbReference>
<dbReference type="STRING" id="10116.ENSRNOP00000017264"/>
<dbReference type="PhosphoSitePlus" id="D3ZGQ5"/>
<dbReference type="PaxDb" id="10116-ENSRNOP00000017264"/>
<dbReference type="Ensembl" id="ENSRNOT00000017264.7">
    <property type="protein sequence ID" value="ENSRNOP00000017264.5"/>
    <property type="gene ID" value="ENSRNOG00000012866.7"/>
</dbReference>
<dbReference type="GeneID" id="287473"/>
<dbReference type="KEGG" id="rno:287473"/>
<dbReference type="AGR" id="RGD:1306897"/>
<dbReference type="CTD" id="284086"/>
<dbReference type="RGD" id="1306897">
    <property type="gene designation" value="Nek8"/>
</dbReference>
<dbReference type="eggNOG" id="KOG0589">
    <property type="taxonomic scope" value="Eukaryota"/>
</dbReference>
<dbReference type="GeneTree" id="ENSGT00940000159297"/>
<dbReference type="HOGENOM" id="CLU_000288_123_1_1"/>
<dbReference type="InParanoid" id="D3ZGQ5"/>
<dbReference type="OMA" id="CPQQVPV"/>
<dbReference type="OrthoDB" id="248923at2759"/>
<dbReference type="PhylomeDB" id="D3ZGQ5"/>
<dbReference type="TreeFam" id="TF106472"/>
<dbReference type="PRO" id="PR:D3ZGQ5"/>
<dbReference type="Proteomes" id="UP000002494">
    <property type="component" value="Chromosome 10"/>
</dbReference>
<dbReference type="Proteomes" id="UP000234681">
    <property type="component" value="Chromosome 10"/>
</dbReference>
<dbReference type="Bgee" id="ENSRNOG00000012866">
    <property type="expression patterns" value="Expressed in adult mammalian kidney and 17 other cell types or tissues"/>
</dbReference>
<dbReference type="GO" id="GO:0005813">
    <property type="term" value="C:centrosome"/>
    <property type="evidence" value="ECO:0007669"/>
    <property type="project" value="UniProtKB-SubCell"/>
</dbReference>
<dbReference type="GO" id="GO:0097546">
    <property type="term" value="C:ciliary base"/>
    <property type="evidence" value="ECO:0000266"/>
    <property type="project" value="RGD"/>
</dbReference>
<dbReference type="GO" id="GO:0097543">
    <property type="term" value="C:ciliary inversin compartment"/>
    <property type="evidence" value="ECO:0000266"/>
    <property type="project" value="RGD"/>
</dbReference>
<dbReference type="GO" id="GO:0005929">
    <property type="term" value="C:cilium"/>
    <property type="evidence" value="ECO:0000266"/>
    <property type="project" value="RGD"/>
</dbReference>
<dbReference type="GO" id="GO:0005737">
    <property type="term" value="C:cytoplasm"/>
    <property type="evidence" value="ECO:0007669"/>
    <property type="project" value="UniProtKB-SubCell"/>
</dbReference>
<dbReference type="GO" id="GO:0005524">
    <property type="term" value="F:ATP binding"/>
    <property type="evidence" value="ECO:0007669"/>
    <property type="project" value="UniProtKB-KW"/>
</dbReference>
<dbReference type="GO" id="GO:0046872">
    <property type="term" value="F:metal ion binding"/>
    <property type="evidence" value="ECO:0007669"/>
    <property type="project" value="UniProtKB-KW"/>
</dbReference>
<dbReference type="GO" id="GO:0106310">
    <property type="term" value="F:protein serine kinase activity"/>
    <property type="evidence" value="ECO:0007669"/>
    <property type="project" value="RHEA"/>
</dbReference>
<dbReference type="GO" id="GO:0004674">
    <property type="term" value="F:protein serine/threonine kinase activity"/>
    <property type="evidence" value="ECO:0007669"/>
    <property type="project" value="UniProtKB-KW"/>
</dbReference>
<dbReference type="GO" id="GO:0009887">
    <property type="term" value="P:animal organ morphogenesis"/>
    <property type="evidence" value="ECO:0000266"/>
    <property type="project" value="RGD"/>
</dbReference>
<dbReference type="GO" id="GO:0007368">
    <property type="term" value="P:determination of left/right symmetry"/>
    <property type="evidence" value="ECO:0000266"/>
    <property type="project" value="RGD"/>
</dbReference>
<dbReference type="GO" id="GO:0007507">
    <property type="term" value="P:heart development"/>
    <property type="evidence" value="ECO:0000266"/>
    <property type="project" value="RGD"/>
</dbReference>
<dbReference type="GO" id="GO:0035330">
    <property type="term" value="P:regulation of hippo signaling"/>
    <property type="evidence" value="ECO:0000266"/>
    <property type="project" value="RGD"/>
</dbReference>
<dbReference type="CDD" id="cd08220">
    <property type="entry name" value="STKc_Nek8"/>
    <property type="match status" value="1"/>
</dbReference>
<dbReference type="FunFam" id="1.10.510.10:FF:000262">
    <property type="entry name" value="Serine/threonine-protein kinase Nek8"/>
    <property type="match status" value="1"/>
</dbReference>
<dbReference type="FunFam" id="2.130.10.30:FF:000017">
    <property type="entry name" value="Serine/threonine-protein kinase Nek8"/>
    <property type="match status" value="1"/>
</dbReference>
<dbReference type="FunFam" id="3.30.200.20:FF:000243">
    <property type="entry name" value="serine/threonine-protein kinase Nek8"/>
    <property type="match status" value="1"/>
</dbReference>
<dbReference type="Gene3D" id="3.30.200.20">
    <property type="entry name" value="Phosphorylase Kinase, domain 1"/>
    <property type="match status" value="1"/>
</dbReference>
<dbReference type="Gene3D" id="2.130.10.30">
    <property type="entry name" value="Regulator of chromosome condensation 1/beta-lactamase-inhibitor protein II"/>
    <property type="match status" value="2"/>
</dbReference>
<dbReference type="Gene3D" id="1.10.510.10">
    <property type="entry name" value="Transferase(Phosphotransferase) domain 1"/>
    <property type="match status" value="1"/>
</dbReference>
<dbReference type="InterPro" id="IPR011009">
    <property type="entry name" value="Kinase-like_dom_sf"/>
</dbReference>
<dbReference type="InterPro" id="IPR000719">
    <property type="entry name" value="Prot_kinase_dom"/>
</dbReference>
<dbReference type="InterPro" id="IPR017441">
    <property type="entry name" value="Protein_kinase_ATP_BS"/>
</dbReference>
<dbReference type="InterPro" id="IPR009091">
    <property type="entry name" value="RCC1/BLIP-II"/>
</dbReference>
<dbReference type="InterPro" id="IPR000408">
    <property type="entry name" value="Reg_chr_condens"/>
</dbReference>
<dbReference type="InterPro" id="IPR008271">
    <property type="entry name" value="Ser/Thr_kinase_AS"/>
</dbReference>
<dbReference type="InterPro" id="IPR051997">
    <property type="entry name" value="STK_NEK"/>
</dbReference>
<dbReference type="InterPro" id="IPR044120">
    <property type="entry name" value="STKc_Nek8"/>
</dbReference>
<dbReference type="PANTHER" id="PTHR44535">
    <property type="entry name" value="PROTEIN CBG16200"/>
    <property type="match status" value="1"/>
</dbReference>
<dbReference type="PANTHER" id="PTHR44535:SF4">
    <property type="entry name" value="SERINE_THREONINE-PROTEIN KINASE NEK8"/>
    <property type="match status" value="1"/>
</dbReference>
<dbReference type="Pfam" id="PF00069">
    <property type="entry name" value="Pkinase"/>
    <property type="match status" value="1"/>
</dbReference>
<dbReference type="Pfam" id="PF25390">
    <property type="entry name" value="WD40_RLD"/>
    <property type="match status" value="1"/>
</dbReference>
<dbReference type="PRINTS" id="PR00633">
    <property type="entry name" value="RCCNDNSATION"/>
</dbReference>
<dbReference type="SMART" id="SM00220">
    <property type="entry name" value="S_TKc"/>
    <property type="match status" value="1"/>
</dbReference>
<dbReference type="SUPFAM" id="SSF56112">
    <property type="entry name" value="Protein kinase-like (PK-like)"/>
    <property type="match status" value="1"/>
</dbReference>
<dbReference type="SUPFAM" id="SSF50985">
    <property type="entry name" value="RCC1/BLIP-II"/>
    <property type="match status" value="1"/>
</dbReference>
<dbReference type="PROSITE" id="PS00107">
    <property type="entry name" value="PROTEIN_KINASE_ATP"/>
    <property type="match status" value="1"/>
</dbReference>
<dbReference type="PROSITE" id="PS50011">
    <property type="entry name" value="PROTEIN_KINASE_DOM"/>
    <property type="match status" value="1"/>
</dbReference>
<dbReference type="PROSITE" id="PS00108">
    <property type="entry name" value="PROTEIN_KINASE_ST"/>
    <property type="match status" value="1"/>
</dbReference>
<dbReference type="PROSITE" id="PS50012">
    <property type="entry name" value="RCC1_3"/>
    <property type="match status" value="4"/>
</dbReference>
<name>NEK8_RAT</name>
<evidence type="ECO:0000250" key="1"/>
<evidence type="ECO:0000250" key="2">
    <source>
        <dbReference type="UniProtKB" id="Q86SG6"/>
    </source>
</evidence>
<evidence type="ECO:0000250" key="3">
    <source>
        <dbReference type="UniProtKB" id="Q91ZR4"/>
    </source>
</evidence>
<evidence type="ECO:0000255" key="4">
    <source>
        <dbReference type="PROSITE-ProRule" id="PRU00159"/>
    </source>
</evidence>
<evidence type="ECO:0000255" key="5">
    <source>
        <dbReference type="PROSITE-ProRule" id="PRU10027"/>
    </source>
</evidence>
<evidence type="ECO:0000256" key="6">
    <source>
        <dbReference type="SAM" id="MobiDB-lite"/>
    </source>
</evidence>
<evidence type="ECO:0000269" key="7">
    <source>
    </source>
</evidence>
<evidence type="ECO:0000305" key="8"/>
<organism>
    <name type="scientific">Rattus norvegicus</name>
    <name type="common">Rat</name>
    <dbReference type="NCBI Taxonomy" id="10116"/>
    <lineage>
        <taxon>Eukaryota</taxon>
        <taxon>Metazoa</taxon>
        <taxon>Chordata</taxon>
        <taxon>Craniata</taxon>
        <taxon>Vertebrata</taxon>
        <taxon>Euteleostomi</taxon>
        <taxon>Mammalia</taxon>
        <taxon>Eutheria</taxon>
        <taxon>Euarchontoglires</taxon>
        <taxon>Glires</taxon>
        <taxon>Rodentia</taxon>
        <taxon>Myomorpha</taxon>
        <taxon>Muroidea</taxon>
        <taxon>Muridae</taxon>
        <taxon>Murinae</taxon>
        <taxon>Rattus</taxon>
    </lineage>
</organism>
<sequence length="698" mass="75254">MEKYERIRVVGRGAFGIVHLCLRKADQKLVIIKQIPVEQMTKEERQAAQNECQVLKLLNHPNVIEYYENFLEDKALMIAMEYAPGGTLAEFIQKRCNSLLEEETILHFFVQILLALHHVHTHLILHRDLKTQNILLDKHRMVVKIGDFGISKILSSKSKAYTVVGTPCYISPELCEGKPYNQKSDIWALGCVLYELASLKRAFEAANLPALVLKIMSGTFAPISDRYSPELRQLVLSLLSLEPAQRPPLSHIMAQPLCIRALLNIHTDVGSVRMRRAEKCLTPGTPMAPGSTGSRATSARCRGVPRGPVRPAIPPPLSSVYAWGGGLSIPLRLPMPNTEVVQVAAGRTQKAGVTRSGRLILWEAPPLGTGGGTLLPGAVELPQPQFVSRFLEGQSGVTIKHVACGDLFTACLTDRGIIMTFGSGSNGCLGHGSLTDISQPTIVEALLGYEMVQVACGASHVLALSADGELFAWGRGDGGRLGLGTRESHNCPQQVPMVPGQEAQRVVCGIDCSMILTSPGRVLACGSNRFNKLGLDCLSLEEEPVPHQQVEEALSFTPLGSAPLDRETLLCVDLGTAHSAAVTASGACYTFGSNQHGQLGTSSRRVSRAPCRVQGLEGIKMVMVACGDAFTVAIGAEGEVYSWGKGARGRLGRRDEDAGLPRPVQLDETHPYTVTSVSCCHGNTLLAVRSVTDEPVPP</sequence>